<organism>
    <name type="scientific">Mycobacterium tuberculosis (strain ATCC 25618 / H37Rv)</name>
    <dbReference type="NCBI Taxonomy" id="83332"/>
    <lineage>
        <taxon>Bacteria</taxon>
        <taxon>Bacillati</taxon>
        <taxon>Actinomycetota</taxon>
        <taxon>Actinomycetes</taxon>
        <taxon>Mycobacteriales</taxon>
        <taxon>Mycobacteriaceae</taxon>
        <taxon>Mycobacterium</taxon>
        <taxon>Mycobacterium tuberculosis complex</taxon>
    </lineage>
</organism>
<name>Y2715_MYCTU</name>
<accession>P9WNH3</accession>
<accession>L0TD47</accession>
<accession>O07214</accession>
<accession>P0A572</accession>
<accession>P28176</accession>
<keyword id="KW-0378">Hydrolase</keyword>
<keyword id="KW-1185">Reference proteome</keyword>
<reference key="1">
    <citation type="journal article" date="1998" name="Nature">
        <title>Deciphering the biology of Mycobacterium tuberculosis from the complete genome sequence.</title>
        <authorList>
            <person name="Cole S.T."/>
            <person name="Brosch R."/>
            <person name="Parkhill J."/>
            <person name="Garnier T."/>
            <person name="Churcher C.M."/>
            <person name="Harris D.E."/>
            <person name="Gordon S.V."/>
            <person name="Eiglmeier K."/>
            <person name="Gas S."/>
            <person name="Barry C.E. III"/>
            <person name="Tekaia F."/>
            <person name="Badcock K."/>
            <person name="Basham D."/>
            <person name="Brown D."/>
            <person name="Chillingworth T."/>
            <person name="Connor R."/>
            <person name="Davies R.M."/>
            <person name="Devlin K."/>
            <person name="Feltwell T."/>
            <person name="Gentles S."/>
            <person name="Hamlin N."/>
            <person name="Holroyd S."/>
            <person name="Hornsby T."/>
            <person name="Jagels K."/>
            <person name="Krogh A."/>
            <person name="McLean J."/>
            <person name="Moule S."/>
            <person name="Murphy L.D."/>
            <person name="Oliver S."/>
            <person name="Osborne J."/>
            <person name="Quail M.A."/>
            <person name="Rajandream M.A."/>
            <person name="Rogers J."/>
            <person name="Rutter S."/>
            <person name="Seeger K."/>
            <person name="Skelton S."/>
            <person name="Squares S."/>
            <person name="Squares R."/>
            <person name="Sulston J.E."/>
            <person name="Taylor K."/>
            <person name="Whitehead S."/>
            <person name="Barrell B.G."/>
        </authorList>
    </citation>
    <scope>NUCLEOTIDE SEQUENCE [LARGE SCALE GENOMIC DNA]</scope>
    <source>
        <strain>ATCC 25618 / H37Rv</strain>
    </source>
</reference>
<reference key="2">
    <citation type="submission" date="1991-04" db="EMBL/GenBank/DDBJ databases">
        <authorList>
            <person name="Patki A.H."/>
            <person name="Dale J.W."/>
        </authorList>
    </citation>
    <scope>PRELIMINARY NUCLEOTIDE SEQUENCE [GENOMIC DNA] OF 135-341</scope>
    <source>
        <strain>Isolate 50410</strain>
    </source>
</reference>
<reference key="3">
    <citation type="journal article" date="2008" name="BMC Syst. Biol.">
        <title>targetTB: a target identification pipeline for Mycobacterium tuberculosis through an interactome, reactome and genome-scale structural analysis.</title>
        <authorList>
            <person name="Raman K."/>
            <person name="Yeturu K."/>
            <person name="Chandra N."/>
        </authorList>
    </citation>
    <scope>IDENTIFICATION AS A DRUG TARGET [LARGE SCALE ANALYSIS]</scope>
</reference>
<reference key="4">
    <citation type="journal article" date="2011" name="Mol. Cell. Proteomics">
        <title>Proteogenomic analysis of Mycobacterium tuberculosis by high resolution mass spectrometry.</title>
        <authorList>
            <person name="Kelkar D.S."/>
            <person name="Kumar D."/>
            <person name="Kumar P."/>
            <person name="Balakrishnan L."/>
            <person name="Muthusamy B."/>
            <person name="Yadav A.K."/>
            <person name="Shrivastava P."/>
            <person name="Marimuthu A."/>
            <person name="Anand S."/>
            <person name="Sundaram H."/>
            <person name="Kingsbury R."/>
            <person name="Harsha H.C."/>
            <person name="Nair B."/>
            <person name="Prasad T.S."/>
            <person name="Chauhan D.S."/>
            <person name="Katoch K."/>
            <person name="Katoch V.M."/>
            <person name="Kumar P."/>
            <person name="Chaerkady R."/>
            <person name="Ramachandran S."/>
            <person name="Dash D."/>
            <person name="Pandey A."/>
        </authorList>
    </citation>
    <scope>IDENTIFICATION BY MASS SPECTROMETRY [LARGE SCALE ANALYSIS]</scope>
    <source>
        <strain>ATCC 25618 / H37Rv</strain>
    </source>
</reference>
<protein>
    <recommendedName>
        <fullName>Uncharacterized protein Rv2715</fullName>
    </recommendedName>
</protein>
<comment type="miscellaneous">
    <text>Was identified as a high-confidence drug target.</text>
</comment>
<comment type="similarity">
    <text evidence="2">Belongs to the DmpD/TodF/XylF esterase family.</text>
</comment>
<comment type="caution">
    <text evidence="2">Ref.2 (CAA41963) sequence was wrongly assigned to be a thymidylate synthase.</text>
</comment>
<comment type="sequence caution" evidence="2">
    <conflict type="frameshift">
        <sequence resource="EMBL-CDS" id="CAA41963"/>
    </conflict>
    <text>Including one that fuses RV2715 and RV2716 into one putative protein.</text>
</comment>
<dbReference type="EMBL" id="AL123456">
    <property type="protein sequence ID" value="CCP45513.1"/>
    <property type="molecule type" value="Genomic_DNA"/>
</dbReference>
<dbReference type="EMBL" id="X59273">
    <property type="protein sequence ID" value="CAA41963.1"/>
    <property type="status" value="ALT_FRAME"/>
    <property type="molecule type" value="Genomic_DNA"/>
</dbReference>
<dbReference type="PIR" id="F70532">
    <property type="entry name" value="F70532"/>
</dbReference>
<dbReference type="RefSeq" id="NP_217231.1">
    <property type="nucleotide sequence ID" value="NC_000962.3"/>
</dbReference>
<dbReference type="RefSeq" id="WP_003900558.1">
    <property type="nucleotide sequence ID" value="NZ_NVQJ01000017.1"/>
</dbReference>
<dbReference type="SMR" id="P9WNH3"/>
<dbReference type="FunCoup" id="P9WNH3">
    <property type="interactions" value="238"/>
</dbReference>
<dbReference type="STRING" id="83332.Rv2715"/>
<dbReference type="ESTHER" id="myctu-YR15">
    <property type="family name" value="Epoxide_hydrolase"/>
</dbReference>
<dbReference type="PaxDb" id="83332-Rv2715"/>
<dbReference type="DNASU" id="887974"/>
<dbReference type="GeneID" id="887974"/>
<dbReference type="KEGG" id="mtu:Rv2715"/>
<dbReference type="KEGG" id="mtv:RVBD_2715"/>
<dbReference type="TubercuList" id="Rv2715"/>
<dbReference type="eggNOG" id="COG2267">
    <property type="taxonomic scope" value="Bacteria"/>
</dbReference>
<dbReference type="InParanoid" id="P9WNH3"/>
<dbReference type="OrthoDB" id="3371334at2"/>
<dbReference type="PhylomeDB" id="P9WNH3"/>
<dbReference type="Proteomes" id="UP000001584">
    <property type="component" value="Chromosome"/>
</dbReference>
<dbReference type="GO" id="GO:0005886">
    <property type="term" value="C:plasma membrane"/>
    <property type="evidence" value="ECO:0007005"/>
    <property type="project" value="MTBBASE"/>
</dbReference>
<dbReference type="GO" id="GO:0016787">
    <property type="term" value="F:hydrolase activity"/>
    <property type="evidence" value="ECO:0007669"/>
    <property type="project" value="UniProtKB-KW"/>
</dbReference>
<dbReference type="FunFam" id="3.40.50.1820:FF:000327">
    <property type="entry name" value="Alpha/beta hydrolase"/>
    <property type="match status" value="1"/>
</dbReference>
<dbReference type="Gene3D" id="3.40.50.1820">
    <property type="entry name" value="alpha/beta hydrolase"/>
    <property type="match status" value="1"/>
</dbReference>
<dbReference type="InterPro" id="IPR000073">
    <property type="entry name" value="AB_hydrolase_1"/>
</dbReference>
<dbReference type="InterPro" id="IPR029058">
    <property type="entry name" value="AB_hydrolase_fold"/>
</dbReference>
<dbReference type="InterPro" id="IPR050266">
    <property type="entry name" value="AB_hydrolase_sf"/>
</dbReference>
<dbReference type="InterPro" id="IPR000639">
    <property type="entry name" value="Epox_hydrolase-like"/>
</dbReference>
<dbReference type="PANTHER" id="PTHR43798:SF33">
    <property type="entry name" value="HYDROLASE, PUTATIVE (AFU_ORTHOLOGUE AFUA_2G14860)-RELATED"/>
    <property type="match status" value="1"/>
</dbReference>
<dbReference type="PANTHER" id="PTHR43798">
    <property type="entry name" value="MONOACYLGLYCEROL LIPASE"/>
    <property type="match status" value="1"/>
</dbReference>
<dbReference type="Pfam" id="PF00561">
    <property type="entry name" value="Abhydrolase_1"/>
    <property type="match status" value="1"/>
</dbReference>
<dbReference type="PRINTS" id="PR00111">
    <property type="entry name" value="ABHYDROLASE"/>
</dbReference>
<dbReference type="PRINTS" id="PR00412">
    <property type="entry name" value="EPOXHYDRLASE"/>
</dbReference>
<dbReference type="SUPFAM" id="SSF53474">
    <property type="entry name" value="alpha/beta-Hydrolases"/>
    <property type="match status" value="1"/>
</dbReference>
<gene>
    <name type="ordered locus">Rv2715</name>
    <name type="ORF">MTCY05A6.36</name>
</gene>
<sequence length="341" mass="36933">MTERKRNLRPVRDVAPPTLQFRTVHGYRRAFRIAGSGPAILLIHGIGDNSTTWNGVHAKLAQRFTVIAPDLLGHGQSDKPRADYSVAAYANGMRDLLSVLDIERVTIVGHSLGGGVAMQFAYQFPQLVDRLILVSAGGVTKDVNIVFRLASLPMGSEAMALLRLPLVLPAVQIAGRIVGKAIGTTSLGHDLPNVLRILDDLPEPTASAAFGRTLRAVVDWRGQMVTMLDRCYLTEAIPVQIIWGTKDVVLPVRHAHMAHAAMPGSQLEIFEGSGHFPFHDDPARFIDIVERFMDTTEPAEYDQAALRALLRRGGGEATVTGSADTRVAVLNAIGSNERSAT</sequence>
<feature type="chain" id="PRO_0000207084" description="Uncharacterized protein Rv2715">
    <location>
        <begin position="1"/>
        <end position="341"/>
    </location>
</feature>
<feature type="active site" evidence="1">
    <location>
        <position position="111"/>
    </location>
</feature>
<feature type="active site" evidence="1">
    <location>
        <position position="247"/>
    </location>
</feature>
<feature type="active site" evidence="1">
    <location>
        <position position="275"/>
    </location>
</feature>
<evidence type="ECO:0000250" key="1"/>
<evidence type="ECO:0000305" key="2"/>
<proteinExistence type="evidence at protein level"/>